<keyword id="KW-0067">ATP-binding</keyword>
<keyword id="KW-0414">Isoprene biosynthesis</keyword>
<keyword id="KW-0418">Kinase</keyword>
<keyword id="KW-0547">Nucleotide-binding</keyword>
<keyword id="KW-1185">Reference proteome</keyword>
<keyword id="KW-0808">Transferase</keyword>
<feature type="chain" id="PRO_1000190689" description="4-diphosphocytidyl-2-C-methyl-D-erythritol kinase">
    <location>
        <begin position="1"/>
        <end position="279"/>
    </location>
</feature>
<feature type="active site" evidence="1">
    <location>
        <position position="11"/>
    </location>
</feature>
<feature type="active site" evidence="1">
    <location>
        <position position="137"/>
    </location>
</feature>
<feature type="binding site" evidence="1">
    <location>
        <begin position="95"/>
        <end position="105"/>
    </location>
    <ligand>
        <name>ATP</name>
        <dbReference type="ChEBI" id="CHEBI:30616"/>
    </ligand>
</feature>
<name>ISPE_GEODF</name>
<sequence length="279" mass="29859">MKTIECKAPAKVNYRLDVLRRRPDGYHDLRMIMQRIDLCDDIRISLSETPGVRVACGKEGVPDGPGNIAWRAADALLKLSGRCTGIDISIVKNIPVAAGLGGGSSDCASALMGVNELLELHLTDEQLMEAGSKLGADVPFFIFKKTALAEGIGDKLAAVEAAPAWLVIVNPNLAVSTAWVYQNLQLTAGKDEYIIPRFYGSVSDICAILANDLEKVTIGRFPVINQIKQKLLQVGAAGSLMSGSGSTVFGIFAEEAPARKAAEKLSRESDWFVAAVKTL</sequence>
<accession>B9M5U2</accession>
<proteinExistence type="inferred from homology"/>
<evidence type="ECO:0000255" key="1">
    <source>
        <dbReference type="HAMAP-Rule" id="MF_00061"/>
    </source>
</evidence>
<organism>
    <name type="scientific">Geotalea daltonii (strain DSM 22248 / JCM 15807 / FRC-32)</name>
    <name type="common">Geobacter daltonii</name>
    <dbReference type="NCBI Taxonomy" id="316067"/>
    <lineage>
        <taxon>Bacteria</taxon>
        <taxon>Pseudomonadati</taxon>
        <taxon>Thermodesulfobacteriota</taxon>
        <taxon>Desulfuromonadia</taxon>
        <taxon>Geobacterales</taxon>
        <taxon>Geobacteraceae</taxon>
        <taxon>Geotalea</taxon>
    </lineage>
</organism>
<gene>
    <name evidence="1" type="primary">ispE</name>
    <name type="ordered locus">Geob_1565</name>
</gene>
<protein>
    <recommendedName>
        <fullName evidence="1">4-diphosphocytidyl-2-C-methyl-D-erythritol kinase</fullName>
        <shortName evidence="1">CMK</shortName>
        <ecNumber evidence="1">2.7.1.148</ecNumber>
    </recommendedName>
    <alternativeName>
        <fullName evidence="1">4-(cytidine-5'-diphospho)-2-C-methyl-D-erythritol kinase</fullName>
    </alternativeName>
</protein>
<reference key="1">
    <citation type="submission" date="2009-01" db="EMBL/GenBank/DDBJ databases">
        <title>Complete sequence of Geobacter sp. FRC-32.</title>
        <authorList>
            <consortium name="US DOE Joint Genome Institute"/>
            <person name="Lucas S."/>
            <person name="Copeland A."/>
            <person name="Lapidus A."/>
            <person name="Glavina del Rio T."/>
            <person name="Dalin E."/>
            <person name="Tice H."/>
            <person name="Bruce D."/>
            <person name="Goodwin L."/>
            <person name="Pitluck S."/>
            <person name="Saunders E."/>
            <person name="Brettin T."/>
            <person name="Detter J.C."/>
            <person name="Han C."/>
            <person name="Larimer F."/>
            <person name="Land M."/>
            <person name="Hauser L."/>
            <person name="Kyrpides N."/>
            <person name="Ovchinnikova G."/>
            <person name="Kostka J."/>
            <person name="Richardson P."/>
        </authorList>
    </citation>
    <scope>NUCLEOTIDE SEQUENCE [LARGE SCALE GENOMIC DNA]</scope>
    <source>
        <strain>DSM 22248 / JCM 15807 / FRC-32</strain>
    </source>
</reference>
<comment type="function">
    <text evidence="1">Catalyzes the phosphorylation of the position 2 hydroxy group of 4-diphosphocytidyl-2C-methyl-D-erythritol.</text>
</comment>
<comment type="catalytic activity">
    <reaction evidence="1">
        <text>4-CDP-2-C-methyl-D-erythritol + ATP = 4-CDP-2-C-methyl-D-erythritol 2-phosphate + ADP + H(+)</text>
        <dbReference type="Rhea" id="RHEA:18437"/>
        <dbReference type="ChEBI" id="CHEBI:15378"/>
        <dbReference type="ChEBI" id="CHEBI:30616"/>
        <dbReference type="ChEBI" id="CHEBI:57823"/>
        <dbReference type="ChEBI" id="CHEBI:57919"/>
        <dbReference type="ChEBI" id="CHEBI:456216"/>
        <dbReference type="EC" id="2.7.1.148"/>
    </reaction>
</comment>
<comment type="pathway">
    <text evidence="1">Isoprenoid biosynthesis; isopentenyl diphosphate biosynthesis via DXP pathway; isopentenyl diphosphate from 1-deoxy-D-xylulose 5-phosphate: step 3/6.</text>
</comment>
<comment type="similarity">
    <text evidence="1">Belongs to the GHMP kinase family. IspE subfamily.</text>
</comment>
<dbReference type="EC" id="2.7.1.148" evidence="1"/>
<dbReference type="EMBL" id="CP001390">
    <property type="protein sequence ID" value="ACM19923.1"/>
    <property type="molecule type" value="Genomic_DNA"/>
</dbReference>
<dbReference type="RefSeq" id="WP_012646652.1">
    <property type="nucleotide sequence ID" value="NC_011979.1"/>
</dbReference>
<dbReference type="SMR" id="B9M5U2"/>
<dbReference type="STRING" id="316067.Geob_1565"/>
<dbReference type="KEGG" id="geo:Geob_1565"/>
<dbReference type="eggNOG" id="COG1947">
    <property type="taxonomic scope" value="Bacteria"/>
</dbReference>
<dbReference type="HOGENOM" id="CLU_053057_1_1_7"/>
<dbReference type="OrthoDB" id="9809438at2"/>
<dbReference type="UniPathway" id="UPA00056">
    <property type="reaction ID" value="UER00094"/>
</dbReference>
<dbReference type="Proteomes" id="UP000007721">
    <property type="component" value="Chromosome"/>
</dbReference>
<dbReference type="GO" id="GO:0050515">
    <property type="term" value="F:4-(cytidine 5'-diphospho)-2-C-methyl-D-erythritol kinase activity"/>
    <property type="evidence" value="ECO:0007669"/>
    <property type="project" value="UniProtKB-UniRule"/>
</dbReference>
<dbReference type="GO" id="GO:0005524">
    <property type="term" value="F:ATP binding"/>
    <property type="evidence" value="ECO:0007669"/>
    <property type="project" value="UniProtKB-UniRule"/>
</dbReference>
<dbReference type="GO" id="GO:0019288">
    <property type="term" value="P:isopentenyl diphosphate biosynthetic process, methylerythritol 4-phosphate pathway"/>
    <property type="evidence" value="ECO:0007669"/>
    <property type="project" value="UniProtKB-UniRule"/>
</dbReference>
<dbReference type="GO" id="GO:0016114">
    <property type="term" value="P:terpenoid biosynthetic process"/>
    <property type="evidence" value="ECO:0007669"/>
    <property type="project" value="InterPro"/>
</dbReference>
<dbReference type="Gene3D" id="3.30.230.10">
    <property type="match status" value="1"/>
</dbReference>
<dbReference type="Gene3D" id="3.30.70.890">
    <property type="entry name" value="GHMP kinase, C-terminal domain"/>
    <property type="match status" value="1"/>
</dbReference>
<dbReference type="HAMAP" id="MF_00061">
    <property type="entry name" value="IspE"/>
    <property type="match status" value="1"/>
</dbReference>
<dbReference type="InterPro" id="IPR013750">
    <property type="entry name" value="GHMP_kinase_C_dom"/>
</dbReference>
<dbReference type="InterPro" id="IPR036554">
    <property type="entry name" value="GHMP_kinase_C_sf"/>
</dbReference>
<dbReference type="InterPro" id="IPR006204">
    <property type="entry name" value="GHMP_kinase_N_dom"/>
</dbReference>
<dbReference type="InterPro" id="IPR004424">
    <property type="entry name" value="IspE"/>
</dbReference>
<dbReference type="InterPro" id="IPR020568">
    <property type="entry name" value="Ribosomal_Su5_D2-typ_SF"/>
</dbReference>
<dbReference type="InterPro" id="IPR014721">
    <property type="entry name" value="Ribsml_uS5_D2-typ_fold_subgr"/>
</dbReference>
<dbReference type="NCBIfam" id="TIGR00154">
    <property type="entry name" value="ispE"/>
    <property type="match status" value="1"/>
</dbReference>
<dbReference type="NCBIfam" id="NF011202">
    <property type="entry name" value="PRK14608.1"/>
    <property type="match status" value="1"/>
</dbReference>
<dbReference type="PANTHER" id="PTHR43527">
    <property type="entry name" value="4-DIPHOSPHOCYTIDYL-2-C-METHYL-D-ERYTHRITOL KINASE, CHLOROPLASTIC"/>
    <property type="match status" value="1"/>
</dbReference>
<dbReference type="PANTHER" id="PTHR43527:SF2">
    <property type="entry name" value="4-DIPHOSPHOCYTIDYL-2-C-METHYL-D-ERYTHRITOL KINASE, CHLOROPLASTIC"/>
    <property type="match status" value="1"/>
</dbReference>
<dbReference type="Pfam" id="PF08544">
    <property type="entry name" value="GHMP_kinases_C"/>
    <property type="match status" value="1"/>
</dbReference>
<dbReference type="Pfam" id="PF00288">
    <property type="entry name" value="GHMP_kinases_N"/>
    <property type="match status" value="1"/>
</dbReference>
<dbReference type="PIRSF" id="PIRSF010376">
    <property type="entry name" value="IspE"/>
    <property type="match status" value="1"/>
</dbReference>
<dbReference type="SUPFAM" id="SSF55060">
    <property type="entry name" value="GHMP Kinase, C-terminal domain"/>
    <property type="match status" value="1"/>
</dbReference>
<dbReference type="SUPFAM" id="SSF54211">
    <property type="entry name" value="Ribosomal protein S5 domain 2-like"/>
    <property type="match status" value="1"/>
</dbReference>